<sequence>MRECISIHVGQAGVQIGNACWELYCLEHGIQPDGQMPSDKTIGGGDDSFNTFFSETGAGKHVPRAVFVDLEPTVIDEVRTGTYRQLFHPEQLITGKEDAANNYARGHYTIGKEIIDLVLDRIRKLADQCTGLQGFLVFHSFGGGTGSGFTSLLMERLSVDYGKKSKLEFSIYPAPQVSTAVVEPYNSILTTHTTLEHSDCAFMVDNEAIYDICRRNLDIERPTYTNLNRLISQIVSSITASLRFDGALNVDLTEFQTNLVPYPRIHFPLATYAPVISAEKAYHEQLSVAEITNACFEPANQMVKCDPRHGKYMACCLLYRGDVVPKDVNAAIATIKTKRSIQFVDWCPTGFKVGINYQPPTVVPGGDLAKVQRAVCMLSNTTAIAEAWARLDHKFDLMYAKRAFVHWYVGEGMEEGEFSEAREDMAALEKDYEEVGVDSVEGEGEEEGEEY</sequence>
<reference key="1">
    <citation type="journal article" date="2004" name="Genome Res.">
        <title>The status, quality, and expansion of the NIH full-length cDNA project: the Mammalian Gene Collection (MGC).</title>
        <authorList>
            <consortium name="The MGC Project Team"/>
        </authorList>
    </citation>
    <scope>NUCLEOTIDE SEQUENCE [LARGE SCALE MRNA]</scope>
    <source>
        <tissue>Kidney</tissue>
        <tissue>Pituitary</tissue>
    </source>
</reference>
<reference key="2">
    <citation type="submission" date="2007-04" db="UniProtKB">
        <authorList>
            <person name="Lubec G."/>
            <person name="Afjehi-Sadat L."/>
            <person name="Chen W.-Q."/>
        </authorList>
    </citation>
    <scope>PROTEIN SEQUENCE OF 41-60; 230-243 AND 265-280</scope>
    <scope>IDENTIFICATION BY MASS SPECTROMETRY</scope>
    <source>
        <strain>Sprague-Dawley</strain>
        <tissue>Hippocampus</tissue>
        <tissue>Spinal cord</tissue>
    </source>
</reference>
<reference key="3">
    <citation type="journal article" date="1997" name="Dev. Growth Differ.">
        <title>Tubulin tyrosine ligase: protein and mRNA expression in developing rat skeletal muscle.</title>
        <authorList>
            <person name="Arregui C.O."/>
            <person name="Mas C.R."/>
            <person name="Argarana C.E."/>
            <person name="Barra H.S."/>
        </authorList>
    </citation>
    <scope>TYROSINATION</scope>
</reference>
<comment type="function">
    <text evidence="3">Tubulin is the major constituent of microtubules, protein filaments consisting of alpha- and beta-tubulin heterodimers (By similarity). Microtubules grow by the addition of GTP-tubulin dimers to the microtubule end, where a stabilizing cap forms (By similarity). Below the cap, tubulin dimers are in GDP-bound state, owing to GTPase activity of alpha-tubulin (By similarity).</text>
</comment>
<comment type="catalytic activity">
    <reaction evidence="3">
        <text>GTP + H2O = GDP + phosphate + H(+)</text>
        <dbReference type="Rhea" id="RHEA:19669"/>
        <dbReference type="ChEBI" id="CHEBI:15377"/>
        <dbReference type="ChEBI" id="CHEBI:15378"/>
        <dbReference type="ChEBI" id="CHEBI:37565"/>
        <dbReference type="ChEBI" id="CHEBI:43474"/>
        <dbReference type="ChEBI" id="CHEBI:58189"/>
    </reaction>
    <physiologicalReaction direction="left-to-right" evidence="3">
        <dbReference type="Rhea" id="RHEA:19670"/>
    </physiologicalReaction>
</comment>
<comment type="cofactor">
    <cofactor evidence="3">
        <name>Mg(2+)</name>
        <dbReference type="ChEBI" id="CHEBI:18420"/>
    </cofactor>
</comment>
<comment type="subunit">
    <text evidence="3">Heterodimer of alpha- and beta-tubulin (By similarity). A typical microtubule is a hollow water-filled tube with an outer diameter of 25 nm and an inner diameter of 15 nM (By similarity). Alpha-beta heterodimers associate head-to-tail to form protofilaments running lengthwise along the microtubule wall with the beta-tubulin subunit facing the microtubule plus end conferring a structural polarity (By similarity). Microtubules usually have 13 protofilaments but different protofilament numbers can be found in some organisms and specialized cells (By similarity). Interacts with gamma-tubulin; the interaction allows microtubules to nucleate from the gamma-tubulin ring complex (gTuRC) (By similarity). Nascent microtubule interacts (via alpha-tubulin MREC motif) with TTC5/STRAP; this interaction may result in tubulin mRNA-targeted degradation (By similarity). Component of sperm flagellar doublet microtubules (By similarity).</text>
</comment>
<comment type="subcellular location">
    <subcellularLocation>
        <location>Cytoplasm</location>
        <location>Cytoskeleton</location>
    </subcellularLocation>
</comment>
<comment type="domain">
    <text evidence="3">The MREC motif mediates interaction with TTC5/STRAP and may be critical for tubulin autoregulation.</text>
</comment>
<comment type="PTM">
    <text evidence="2">Some glutamate residues at the C-terminus are polyglycylated, resulting in polyglycine chains on the gamma-carboxyl group. Glycylation is mainly limited to tubulin incorporated into axonemes (cilia and flagella) whereas glutamylation is prevalent in neuronal cells, centrioles, axonemes, and the mitotic spindle. Both modifications can coexist on the same protein on adjacent residues, and lowering polyglycylation levels increases polyglutamylation, and reciprocally. Cilia and flagella glycylation is required for their stability and maintenance. Flagella glycylation controls sperm motility.</text>
</comment>
<comment type="PTM">
    <text evidence="2 6">Some glutamate residues at the C-terminus are polyglutamylated, resulting in polyglutamate chains on the gamma-carboxyl group (By similarity). Polyglutamylation plays a key role in microtubule severing by spastin (SPAST). SPAST preferentially recognizes and acts on microtubules decorated with short polyglutamate tails: severing activity by SPAST increases as the number of glutamates per tubulin rises from one to eight, but decreases beyond this glutamylation threshold (By similarity). Glutamylation is also involved in cilia motility (By similarity).</text>
</comment>
<comment type="PTM">
    <text evidence="6">Acetylation of alpha chains at Lys-40 is located inside the microtubule lumen. This modification has been correlated with increased microtubule stability, intracellular transport and ciliary assembly.</text>
</comment>
<comment type="PTM">
    <text evidence="3">Methylation of alpha chains at Lys-40 is found in mitotic microtubules and is required for normal mitosis and cytokinesis contributing to genomic stability.</text>
</comment>
<comment type="PTM">
    <text evidence="6">Nitration of Tyr-451 is irreversible and interferes with normal dynein intracellular distribution.</text>
</comment>
<comment type="PTM">
    <text evidence="8">Undergoes a tyrosination/detyrosination cycle, the cyclic removal and re-addition of a C-terminal tyrosine residue by the enzymes tubulin tyrosine carboxypeptidase (MATCAP1, VASH1 or VASH2) and tubulin tyrosine ligase (TTL), respectively.</text>
</comment>
<comment type="PTM">
    <molecule>Tubulin alpha-1B chain</molecule>
    <text evidence="4 6">Tyrosination promotes microtubule interaction with CAP-Gly domain-containing proteins such as CLIP1, CLIP2 and DCTN1 (By similarity). Tyrosination regulates the initiation of dynein-dynactin motility via interaction with DCTN1, which brings the dynein-dynactin complex into contact with microtubules. In neurons, tyrosinated tubulins mediate the initiation of retrograde vesicle transport (By similarity).</text>
</comment>
<comment type="PTM">
    <molecule>Detyrosinated tubulin alpha-1B chain</molecule>
    <text evidence="2 3">Detyrosination is involved in metaphase plate congression by guiding chromosomes during mitosis: detyrosination promotes interaction with CENPE, promoting pole-proximal transport of chromosomes toward the equator (By similarity). Detyrosination increases microtubules-dependent mechanotransduction in dystrophic cardiac and skeletal muscle. In cardiomyocytes, detyrosinated microtubules are required to resist to contractile compression during contraction: detyrosination promotes association with desmin (DES) at force-generating sarcomeres, leading to buckled microtubules and mechanical resistance to contraction (By similarity).</text>
</comment>
<comment type="similarity">
    <text evidence="9">Belongs to the tubulin family.</text>
</comment>
<gene>
    <name type="primary">Tuba1b</name>
    <name type="synonym">Tuba2</name>
</gene>
<keyword id="KW-0007">Acetylation</keyword>
<keyword id="KW-0963">Cytoplasm</keyword>
<keyword id="KW-0206">Cytoskeleton</keyword>
<keyword id="KW-0903">Direct protein sequencing</keyword>
<keyword id="KW-0342">GTP-binding</keyword>
<keyword id="KW-0378">Hydrolase</keyword>
<keyword id="KW-1017">Isopeptide bond</keyword>
<keyword id="KW-0460">Magnesium</keyword>
<keyword id="KW-0479">Metal-binding</keyword>
<keyword id="KW-0488">Methylation</keyword>
<keyword id="KW-0493">Microtubule</keyword>
<keyword id="KW-0944">Nitration</keyword>
<keyword id="KW-0547">Nucleotide-binding</keyword>
<keyword id="KW-0597">Phosphoprotein</keyword>
<keyword id="KW-1185">Reference proteome</keyword>
<keyword id="KW-0832">Ubl conjugation</keyword>
<name>TBA1B_RAT</name>
<proteinExistence type="evidence at protein level"/>
<protein>
    <recommendedName>
        <fullName>Tubulin alpha-1B chain</fullName>
        <ecNumber evidence="3">3.6.5.-</ecNumber>
    </recommendedName>
    <alternativeName>
        <fullName>Alpha-tubulin 2</fullName>
    </alternativeName>
    <alternativeName>
        <fullName>Tubulin alpha-2 chain</fullName>
    </alternativeName>
    <component>
        <recommendedName>
            <fullName>Detyrosinated tubulin alpha-1B chain</fullName>
        </recommendedName>
    </component>
</protein>
<accession>Q6P9V9</accession>
<evidence type="ECO:0000250" key="1"/>
<evidence type="ECO:0000250" key="2">
    <source>
        <dbReference type="UniProtKB" id="P05213"/>
    </source>
</evidence>
<evidence type="ECO:0000250" key="3">
    <source>
        <dbReference type="UniProtKB" id="P68363"/>
    </source>
</evidence>
<evidence type="ECO:0000250" key="4">
    <source>
        <dbReference type="UniProtKB" id="P68369"/>
    </source>
</evidence>
<evidence type="ECO:0000250" key="5">
    <source>
        <dbReference type="UniProtKB" id="P68373"/>
    </source>
</evidence>
<evidence type="ECO:0000250" key="6">
    <source>
        <dbReference type="UniProtKB" id="Q71U36"/>
    </source>
</evidence>
<evidence type="ECO:0000256" key="7">
    <source>
        <dbReference type="SAM" id="MobiDB-lite"/>
    </source>
</evidence>
<evidence type="ECO:0000269" key="8">
    <source>
    </source>
</evidence>
<evidence type="ECO:0000305" key="9"/>
<organism>
    <name type="scientific">Rattus norvegicus</name>
    <name type="common">Rat</name>
    <dbReference type="NCBI Taxonomy" id="10116"/>
    <lineage>
        <taxon>Eukaryota</taxon>
        <taxon>Metazoa</taxon>
        <taxon>Chordata</taxon>
        <taxon>Craniata</taxon>
        <taxon>Vertebrata</taxon>
        <taxon>Euteleostomi</taxon>
        <taxon>Mammalia</taxon>
        <taxon>Eutheria</taxon>
        <taxon>Euarchontoglires</taxon>
        <taxon>Glires</taxon>
        <taxon>Rodentia</taxon>
        <taxon>Myomorpha</taxon>
        <taxon>Muroidea</taxon>
        <taxon>Muridae</taxon>
        <taxon>Murinae</taxon>
        <taxon>Rattus</taxon>
    </lineage>
</organism>
<dbReference type="EC" id="3.6.5.-" evidence="3"/>
<dbReference type="EMBL" id="BC060572">
    <property type="protein sequence ID" value="AAH60572.1"/>
    <property type="molecule type" value="mRNA"/>
</dbReference>
<dbReference type="EMBL" id="BC076379">
    <property type="protein sequence ID" value="AAH76379.1"/>
    <property type="molecule type" value="mRNA"/>
</dbReference>
<dbReference type="RefSeq" id="NP_001037735.1">
    <property type="nucleotide sequence ID" value="NM_001044270.3"/>
</dbReference>
<dbReference type="SMR" id="Q6P9V9"/>
<dbReference type="BioGRID" id="272236">
    <property type="interactions" value="5"/>
</dbReference>
<dbReference type="CORUM" id="Q6P9V9"/>
<dbReference type="FunCoup" id="Q6P9V9">
    <property type="interactions" value="1956"/>
</dbReference>
<dbReference type="IntAct" id="Q6P9V9">
    <property type="interactions" value="6"/>
</dbReference>
<dbReference type="MINT" id="Q6P9V9"/>
<dbReference type="STRING" id="10116.ENSRNOP00000070868"/>
<dbReference type="GlyGen" id="Q6P9V9">
    <property type="glycosylation" value="1 site, 1 O-linked glycan (1 site)"/>
</dbReference>
<dbReference type="iPTMnet" id="Q6P9V9"/>
<dbReference type="PhosphoSitePlus" id="Q6P9V9"/>
<dbReference type="jPOST" id="Q6P9V9"/>
<dbReference type="GeneID" id="500929"/>
<dbReference type="KEGG" id="rno:500929"/>
<dbReference type="UCSC" id="RGD:1565476">
    <property type="organism name" value="rat"/>
</dbReference>
<dbReference type="AGR" id="RGD:1565476"/>
<dbReference type="CTD" id="10376"/>
<dbReference type="RGD" id="1565476">
    <property type="gene designation" value="Tuba1b"/>
</dbReference>
<dbReference type="VEuPathDB" id="HostDB:ENSRNOG00000053468"/>
<dbReference type="HOGENOM" id="CLU_015718_0_0_1"/>
<dbReference type="InParanoid" id="Q6P9V9"/>
<dbReference type="OrthoDB" id="1844at2759"/>
<dbReference type="Reactome" id="R-RNO-190840">
    <property type="pathway name" value="Microtubule-dependent trafficking of connexons from Golgi to the plasma membrane"/>
</dbReference>
<dbReference type="Reactome" id="R-RNO-2132295">
    <property type="pathway name" value="MHC class II antigen presentation"/>
</dbReference>
<dbReference type="Reactome" id="R-RNO-2467813">
    <property type="pathway name" value="Separation of Sister Chromatids"/>
</dbReference>
<dbReference type="Reactome" id="R-RNO-2500257">
    <property type="pathway name" value="Resolution of Sister Chromatid Cohesion"/>
</dbReference>
<dbReference type="Reactome" id="R-RNO-3371497">
    <property type="pathway name" value="HSP90 chaperone cycle for steroid hormone receptors (SHR) in the presence of ligand"/>
</dbReference>
<dbReference type="Reactome" id="R-RNO-380320">
    <property type="pathway name" value="Recruitment of NuMA to mitotic centrosomes"/>
</dbReference>
<dbReference type="Reactome" id="R-RNO-437239">
    <property type="pathway name" value="Recycling pathway of L1"/>
</dbReference>
<dbReference type="Reactome" id="R-RNO-5610787">
    <property type="pathway name" value="Hedgehog 'off' state"/>
</dbReference>
<dbReference type="Reactome" id="R-RNO-5617833">
    <property type="pathway name" value="Cilium Assembly"/>
</dbReference>
<dbReference type="Reactome" id="R-RNO-5620924">
    <property type="pathway name" value="Intraflagellar transport"/>
</dbReference>
<dbReference type="Reactome" id="R-RNO-5626467">
    <property type="pathway name" value="RHO GTPases activate IQGAPs"/>
</dbReference>
<dbReference type="Reactome" id="R-RNO-5663220">
    <property type="pathway name" value="RHO GTPases Activate Formins"/>
</dbReference>
<dbReference type="Reactome" id="R-RNO-6807878">
    <property type="pathway name" value="COPI-mediated anterograde transport"/>
</dbReference>
<dbReference type="Reactome" id="R-RNO-6811434">
    <property type="pathway name" value="COPI-dependent Golgi-to-ER retrograde traffic"/>
</dbReference>
<dbReference type="Reactome" id="R-RNO-6811436">
    <property type="pathway name" value="COPI-independent Golgi-to-ER retrograde traffic"/>
</dbReference>
<dbReference type="Reactome" id="R-RNO-68877">
    <property type="pathway name" value="Mitotic Prometaphase"/>
</dbReference>
<dbReference type="Reactome" id="R-RNO-8852276">
    <property type="pathway name" value="The role of GTSE1 in G2/M progression after G2 checkpoint"/>
</dbReference>
<dbReference type="Reactome" id="R-RNO-8955332">
    <property type="pathway name" value="Carboxyterminal post-translational modifications of tubulin"/>
</dbReference>
<dbReference type="Reactome" id="R-RNO-9013407">
    <property type="pathway name" value="RHOH GTPase cycle"/>
</dbReference>
<dbReference type="Reactome" id="R-RNO-9646399">
    <property type="pathway name" value="Aggrephagy"/>
</dbReference>
<dbReference type="Reactome" id="R-RNO-9648025">
    <property type="pathway name" value="EML4 and NUDC in mitotic spindle formation"/>
</dbReference>
<dbReference type="Reactome" id="R-RNO-9668328">
    <property type="pathway name" value="Sealing of the nuclear envelope (NE) by ESCRT-III"/>
</dbReference>
<dbReference type="Reactome" id="R-RNO-983189">
    <property type="pathway name" value="Kinesins"/>
</dbReference>
<dbReference type="Reactome" id="R-RNO-9833482">
    <property type="pathway name" value="PKR-mediated signaling"/>
</dbReference>
<dbReference type="PRO" id="PR:Q6P9V9"/>
<dbReference type="Proteomes" id="UP000002494">
    <property type="component" value="Chromosome 7"/>
</dbReference>
<dbReference type="Bgee" id="ENSRNOG00000053468">
    <property type="expression patterns" value="Expressed in cerebellum and 20 other cell types or tissues"/>
</dbReference>
<dbReference type="GO" id="GO:0005737">
    <property type="term" value="C:cytoplasm"/>
    <property type="evidence" value="ECO:0000318"/>
    <property type="project" value="GO_Central"/>
</dbReference>
<dbReference type="GO" id="GO:0005881">
    <property type="term" value="C:cytoplasmic microtubule"/>
    <property type="evidence" value="ECO:0000266"/>
    <property type="project" value="RGD"/>
</dbReference>
<dbReference type="GO" id="GO:0045121">
    <property type="term" value="C:membrane raft"/>
    <property type="evidence" value="ECO:0000314"/>
    <property type="project" value="CAFA"/>
</dbReference>
<dbReference type="GO" id="GO:0005874">
    <property type="term" value="C:microtubule"/>
    <property type="evidence" value="ECO:0000266"/>
    <property type="project" value="RGD"/>
</dbReference>
<dbReference type="GO" id="GO:0015630">
    <property type="term" value="C:microtubule cytoskeleton"/>
    <property type="evidence" value="ECO:0000250"/>
    <property type="project" value="UniProtKB"/>
</dbReference>
<dbReference type="GO" id="GO:0003725">
    <property type="term" value="F:double-stranded RNA binding"/>
    <property type="evidence" value="ECO:0000266"/>
    <property type="project" value="RGD"/>
</dbReference>
<dbReference type="GO" id="GO:0005525">
    <property type="term" value="F:GTP binding"/>
    <property type="evidence" value="ECO:0000250"/>
    <property type="project" value="UniProtKB"/>
</dbReference>
<dbReference type="GO" id="GO:0003924">
    <property type="term" value="F:GTPase activity"/>
    <property type="evidence" value="ECO:0000250"/>
    <property type="project" value="UniProtKB"/>
</dbReference>
<dbReference type="GO" id="GO:0046872">
    <property type="term" value="F:metal ion binding"/>
    <property type="evidence" value="ECO:0007669"/>
    <property type="project" value="UniProtKB-KW"/>
</dbReference>
<dbReference type="GO" id="GO:0005200">
    <property type="term" value="F:structural constituent of cytoskeleton"/>
    <property type="evidence" value="ECO:0000250"/>
    <property type="project" value="UniProtKB"/>
</dbReference>
<dbReference type="GO" id="GO:0031625">
    <property type="term" value="F:ubiquitin protein ligase binding"/>
    <property type="evidence" value="ECO:0000266"/>
    <property type="project" value="RGD"/>
</dbReference>
<dbReference type="GO" id="GO:0071353">
    <property type="term" value="P:cellular response to interleukin-4"/>
    <property type="evidence" value="ECO:0000266"/>
    <property type="project" value="RGD"/>
</dbReference>
<dbReference type="GO" id="GO:0000226">
    <property type="term" value="P:microtubule cytoskeleton organization"/>
    <property type="evidence" value="ECO:0000250"/>
    <property type="project" value="UniProtKB"/>
</dbReference>
<dbReference type="GO" id="GO:0000278">
    <property type="term" value="P:mitotic cell cycle"/>
    <property type="evidence" value="ECO:0000318"/>
    <property type="project" value="GO_Central"/>
</dbReference>
<dbReference type="CDD" id="cd02186">
    <property type="entry name" value="alpha_tubulin"/>
    <property type="match status" value="1"/>
</dbReference>
<dbReference type="FunFam" id="1.10.287.600:FF:000005">
    <property type="entry name" value="Tubulin alpha chain"/>
    <property type="match status" value="1"/>
</dbReference>
<dbReference type="FunFam" id="3.30.1330.20:FF:000001">
    <property type="entry name" value="Tubulin alpha chain"/>
    <property type="match status" value="1"/>
</dbReference>
<dbReference type="FunFam" id="3.40.50.1440:FF:000002">
    <property type="entry name" value="Tubulin alpha chain"/>
    <property type="match status" value="1"/>
</dbReference>
<dbReference type="Gene3D" id="1.10.287.600">
    <property type="entry name" value="Helix hairpin bin"/>
    <property type="match status" value="1"/>
</dbReference>
<dbReference type="Gene3D" id="3.30.1330.20">
    <property type="entry name" value="Tubulin/FtsZ, C-terminal domain"/>
    <property type="match status" value="1"/>
</dbReference>
<dbReference type="Gene3D" id="3.40.50.1440">
    <property type="entry name" value="Tubulin/FtsZ, GTPase domain"/>
    <property type="match status" value="1"/>
</dbReference>
<dbReference type="InterPro" id="IPR002452">
    <property type="entry name" value="Alpha_tubulin"/>
</dbReference>
<dbReference type="InterPro" id="IPR008280">
    <property type="entry name" value="Tub_FtsZ_C"/>
</dbReference>
<dbReference type="InterPro" id="IPR000217">
    <property type="entry name" value="Tubulin"/>
</dbReference>
<dbReference type="InterPro" id="IPR037103">
    <property type="entry name" value="Tubulin/FtsZ-like_C"/>
</dbReference>
<dbReference type="InterPro" id="IPR018316">
    <property type="entry name" value="Tubulin/FtsZ_2-layer-sand-dom"/>
</dbReference>
<dbReference type="InterPro" id="IPR036525">
    <property type="entry name" value="Tubulin/FtsZ_GTPase_sf"/>
</dbReference>
<dbReference type="InterPro" id="IPR023123">
    <property type="entry name" value="Tubulin_C"/>
</dbReference>
<dbReference type="InterPro" id="IPR017975">
    <property type="entry name" value="Tubulin_CS"/>
</dbReference>
<dbReference type="InterPro" id="IPR003008">
    <property type="entry name" value="Tubulin_FtsZ_GTPase"/>
</dbReference>
<dbReference type="PANTHER" id="PTHR11588">
    <property type="entry name" value="TUBULIN"/>
    <property type="match status" value="1"/>
</dbReference>
<dbReference type="Pfam" id="PF00091">
    <property type="entry name" value="Tubulin"/>
    <property type="match status" value="1"/>
</dbReference>
<dbReference type="Pfam" id="PF03953">
    <property type="entry name" value="Tubulin_C"/>
    <property type="match status" value="1"/>
</dbReference>
<dbReference type="PRINTS" id="PR01162">
    <property type="entry name" value="ALPHATUBULIN"/>
</dbReference>
<dbReference type="PRINTS" id="PR01161">
    <property type="entry name" value="TUBULIN"/>
</dbReference>
<dbReference type="SMART" id="SM00864">
    <property type="entry name" value="Tubulin"/>
    <property type="match status" value="1"/>
</dbReference>
<dbReference type="SMART" id="SM00865">
    <property type="entry name" value="Tubulin_C"/>
    <property type="match status" value="1"/>
</dbReference>
<dbReference type="SUPFAM" id="SSF55307">
    <property type="entry name" value="Tubulin C-terminal domain-like"/>
    <property type="match status" value="1"/>
</dbReference>
<dbReference type="SUPFAM" id="SSF52490">
    <property type="entry name" value="Tubulin nucleotide-binding domain-like"/>
    <property type="match status" value="1"/>
</dbReference>
<dbReference type="PROSITE" id="PS00227">
    <property type="entry name" value="TUBULIN"/>
    <property type="match status" value="1"/>
</dbReference>
<feature type="chain" id="PRO_0000048127" description="Tubulin alpha-1B chain">
    <location>
        <begin position="1"/>
        <end position="451"/>
    </location>
</feature>
<feature type="chain" id="PRO_0000437390" description="Detyrosinated tubulin alpha-1B chain" evidence="3">
    <location>
        <begin position="1"/>
        <end position="450"/>
    </location>
</feature>
<feature type="region of interest" description="Disordered" evidence="7">
    <location>
        <begin position="432"/>
        <end position="451"/>
    </location>
</feature>
<feature type="short sequence motif" description="MREC motif" evidence="3">
    <location>
        <begin position="1"/>
        <end position="4"/>
    </location>
</feature>
<feature type="active site" evidence="3">
    <location>
        <position position="254"/>
    </location>
</feature>
<feature type="binding site" evidence="3">
    <location>
        <position position="10"/>
    </location>
    <ligand>
        <name>GTP</name>
        <dbReference type="ChEBI" id="CHEBI:37565"/>
    </ligand>
</feature>
<feature type="binding site" evidence="3">
    <location>
        <position position="11"/>
    </location>
    <ligand>
        <name>GTP</name>
        <dbReference type="ChEBI" id="CHEBI:37565"/>
    </ligand>
</feature>
<feature type="binding site" evidence="3">
    <location>
        <position position="12"/>
    </location>
    <ligand>
        <name>GTP</name>
        <dbReference type="ChEBI" id="CHEBI:37565"/>
    </ligand>
</feature>
<feature type="binding site" evidence="3">
    <location>
        <position position="15"/>
    </location>
    <ligand>
        <name>GTP</name>
        <dbReference type="ChEBI" id="CHEBI:37565"/>
    </ligand>
</feature>
<feature type="binding site" evidence="3">
    <location>
        <position position="71"/>
    </location>
    <ligand>
        <name>GTP</name>
        <dbReference type="ChEBI" id="CHEBI:37565"/>
    </ligand>
</feature>
<feature type="binding site" evidence="3">
    <location>
        <position position="71"/>
    </location>
    <ligand>
        <name>Mg(2+)</name>
        <dbReference type="ChEBI" id="CHEBI:18420"/>
    </ligand>
</feature>
<feature type="binding site" evidence="3">
    <location>
        <position position="99"/>
    </location>
    <ligand>
        <name>GTP</name>
        <dbReference type="ChEBI" id="CHEBI:37565"/>
    </ligand>
</feature>
<feature type="binding site" evidence="3">
    <location>
        <position position="140"/>
    </location>
    <ligand>
        <name>GTP</name>
        <dbReference type="ChEBI" id="CHEBI:37565"/>
    </ligand>
</feature>
<feature type="binding site" evidence="3">
    <location>
        <position position="143"/>
    </location>
    <ligand>
        <name>GTP</name>
        <dbReference type="ChEBI" id="CHEBI:37565"/>
    </ligand>
</feature>
<feature type="binding site" evidence="3">
    <location>
        <position position="144"/>
    </location>
    <ligand>
        <name>GTP</name>
        <dbReference type="ChEBI" id="CHEBI:37565"/>
    </ligand>
</feature>
<feature type="binding site" evidence="3">
    <location>
        <position position="145"/>
    </location>
    <ligand>
        <name>GTP</name>
        <dbReference type="ChEBI" id="CHEBI:37565"/>
    </ligand>
</feature>
<feature type="binding site" evidence="3">
    <location>
        <position position="146"/>
    </location>
    <ligand>
        <name>GTP</name>
        <dbReference type="ChEBI" id="CHEBI:37565"/>
    </ligand>
</feature>
<feature type="binding site" evidence="3">
    <location>
        <position position="179"/>
    </location>
    <ligand>
        <name>GTP</name>
        <dbReference type="ChEBI" id="CHEBI:37565"/>
    </ligand>
</feature>
<feature type="binding site" evidence="3">
    <location>
        <position position="183"/>
    </location>
    <ligand>
        <name>GTP</name>
        <dbReference type="ChEBI" id="CHEBI:37565"/>
    </ligand>
</feature>
<feature type="binding site" evidence="3">
    <location>
        <position position="206"/>
    </location>
    <ligand>
        <name>GTP</name>
        <dbReference type="ChEBI" id="CHEBI:37565"/>
    </ligand>
</feature>
<feature type="binding site" evidence="3">
    <location>
        <position position="224"/>
    </location>
    <ligand>
        <name>GTP</name>
        <dbReference type="ChEBI" id="CHEBI:37565"/>
    </ligand>
</feature>
<feature type="binding site" evidence="3">
    <location>
        <position position="228"/>
    </location>
    <ligand>
        <name>GTP</name>
        <dbReference type="ChEBI" id="CHEBI:37565"/>
    </ligand>
</feature>
<feature type="binding site" evidence="3">
    <location>
        <position position="252"/>
    </location>
    <ligand>
        <name>GTP</name>
        <dbReference type="ChEBI" id="CHEBI:37565"/>
    </ligand>
</feature>
<feature type="site" description="Involved in polymerization" evidence="1">
    <location>
        <position position="451"/>
    </location>
</feature>
<feature type="modified residue" description="N6,N6,N6-trimethyllysine; alternate" evidence="3">
    <location>
        <position position="40"/>
    </location>
</feature>
<feature type="modified residue" description="N6-acetyllysine; alternate" evidence="3">
    <location>
        <position position="40"/>
    </location>
</feature>
<feature type="modified residue" description="Phosphoserine" evidence="3">
    <location>
        <position position="48"/>
    </location>
</feature>
<feature type="modified residue" description="Phosphoserine" evidence="3">
    <location>
        <position position="232"/>
    </location>
</feature>
<feature type="modified residue" description="3'-nitrotyrosine" evidence="5">
    <location>
        <position position="282"/>
    </location>
</feature>
<feature type="modified residue" description="Omega-N-methylarginine" evidence="3">
    <location>
        <position position="339"/>
    </location>
</feature>
<feature type="modified residue" description="Phosphoserine" evidence="5">
    <location>
        <position position="439"/>
    </location>
</feature>
<feature type="modified residue" description="5-glutamyl polyglutamate" evidence="3">
    <location>
        <position position="443"/>
    </location>
</feature>
<feature type="modified residue" description="5-glutamyl polyglutamate" evidence="4">
    <location>
        <position position="445"/>
    </location>
</feature>
<feature type="modified residue" description="3'-nitrotyrosine" evidence="6">
    <location>
        <position position="451"/>
    </location>
</feature>
<feature type="cross-link" description="Glycyl lysine isopeptide (Lys-Gly) (interchain with G-Cter in ubiquitin)" evidence="3">
    <location>
        <position position="326"/>
    </location>
</feature>
<feature type="cross-link" description="Glycyl lysine isopeptide (Lys-Gly) (interchain with G-Cter in ubiquitin)" evidence="3">
    <location>
        <position position="370"/>
    </location>
</feature>